<dbReference type="EMBL" id="CP017623">
    <property type="protein sequence ID" value="AOW25942.1"/>
    <property type="status" value="ALT_INIT"/>
    <property type="molecule type" value="Genomic_DNA"/>
</dbReference>
<dbReference type="RefSeq" id="XP_721448.2">
    <property type="nucleotide sequence ID" value="XM_716355.2"/>
</dbReference>
<dbReference type="SMR" id="Q5AIA4"/>
<dbReference type="FunCoup" id="Q5AIA4">
    <property type="interactions" value="708"/>
</dbReference>
<dbReference type="STRING" id="237561.Q5AIA4"/>
<dbReference type="GeneID" id="3636813"/>
<dbReference type="KEGG" id="cal:CAALFM_C102610WA"/>
<dbReference type="eggNOG" id="KOG3572">
    <property type="taxonomic scope" value="Eukaryota"/>
</dbReference>
<dbReference type="HOGENOM" id="CLU_000935_1_1_1"/>
<dbReference type="InParanoid" id="Q5AIA4"/>
<dbReference type="OrthoDB" id="39497at2759"/>
<dbReference type="PRO" id="PR:Q5AIA4"/>
<dbReference type="Proteomes" id="UP000000559">
    <property type="component" value="Chromosome 1"/>
</dbReference>
<dbReference type="GO" id="GO:1990130">
    <property type="term" value="C:GATOR1 complex"/>
    <property type="evidence" value="ECO:0000318"/>
    <property type="project" value="GO_Central"/>
</dbReference>
<dbReference type="GO" id="GO:0005774">
    <property type="term" value="C:vacuolar membrane"/>
    <property type="evidence" value="ECO:0007669"/>
    <property type="project" value="UniProtKB-SubCell"/>
</dbReference>
<dbReference type="GO" id="GO:0005096">
    <property type="term" value="F:GTPase activator activity"/>
    <property type="evidence" value="ECO:0007669"/>
    <property type="project" value="InterPro"/>
</dbReference>
<dbReference type="GO" id="GO:0035556">
    <property type="term" value="P:intracellular signal transduction"/>
    <property type="evidence" value="ECO:0007669"/>
    <property type="project" value="InterPro"/>
</dbReference>
<dbReference type="GO" id="GO:1904262">
    <property type="term" value="P:negative regulation of TORC1 signaling"/>
    <property type="evidence" value="ECO:0000318"/>
    <property type="project" value="GO_Central"/>
</dbReference>
<dbReference type="GO" id="GO:0010508">
    <property type="term" value="P:positive regulation of autophagy"/>
    <property type="evidence" value="ECO:0000318"/>
    <property type="project" value="GO_Central"/>
</dbReference>
<dbReference type="CDD" id="cd04449">
    <property type="entry name" value="DEP_DEPDC5-like"/>
    <property type="match status" value="1"/>
</dbReference>
<dbReference type="FunFam" id="1.10.10.10:FF:000707">
    <property type="entry name" value="Vacuolar membrane-associated protein iml1"/>
    <property type="match status" value="1"/>
</dbReference>
<dbReference type="Gene3D" id="1.10.10.10">
    <property type="entry name" value="Winged helix-like DNA-binding domain superfamily/Winged helix DNA-binding domain"/>
    <property type="match status" value="1"/>
</dbReference>
<dbReference type="InterPro" id="IPR000591">
    <property type="entry name" value="DEP_dom"/>
</dbReference>
<dbReference type="InterPro" id="IPR045838">
    <property type="entry name" value="DEPDC5_CTD"/>
</dbReference>
<dbReference type="InterPro" id="IPR027244">
    <property type="entry name" value="IML1"/>
</dbReference>
<dbReference type="InterPro" id="IPR048255">
    <property type="entry name" value="IML1_N"/>
</dbReference>
<dbReference type="InterPro" id="IPR036388">
    <property type="entry name" value="WH-like_DNA-bd_sf"/>
</dbReference>
<dbReference type="InterPro" id="IPR036390">
    <property type="entry name" value="WH_DNA-bd_sf"/>
</dbReference>
<dbReference type="PANTHER" id="PTHR13179">
    <property type="entry name" value="DEP DOMAIN CONTAINING PROTEIN 5"/>
    <property type="match status" value="1"/>
</dbReference>
<dbReference type="PANTHER" id="PTHR13179:SF8">
    <property type="entry name" value="GATOR COMPLEX PROTEIN DEPDC5"/>
    <property type="match status" value="1"/>
</dbReference>
<dbReference type="Pfam" id="PF00610">
    <property type="entry name" value="DEP"/>
    <property type="match status" value="1"/>
</dbReference>
<dbReference type="Pfam" id="PF19418">
    <property type="entry name" value="DEPDC5_CTD"/>
    <property type="match status" value="1"/>
</dbReference>
<dbReference type="Pfam" id="PF12257">
    <property type="entry name" value="IML1"/>
    <property type="match status" value="1"/>
</dbReference>
<dbReference type="SMART" id="SM00049">
    <property type="entry name" value="DEP"/>
    <property type="match status" value="1"/>
</dbReference>
<dbReference type="SUPFAM" id="SSF46785">
    <property type="entry name" value="Winged helix' DNA-binding domain"/>
    <property type="match status" value="1"/>
</dbReference>
<dbReference type="PROSITE" id="PS50186">
    <property type="entry name" value="DEP"/>
    <property type="match status" value="1"/>
</dbReference>
<keyword id="KW-0472">Membrane</keyword>
<keyword id="KW-1185">Reference proteome</keyword>
<keyword id="KW-0926">Vacuole</keyword>
<protein>
    <recommendedName>
        <fullName>Vacuolar membrane-associated protein IML1</fullName>
    </recommendedName>
</protein>
<accession>Q5AIA4</accession>
<accession>A0A1D8PCS4</accession>
<sequence>MQHPRMFNQTSTNAKKPNGSDSSIKVANHSNQRQMSANHASLTIGGSRNPINQRRSMSTKNIGSTLIVSRRNNHYLDMKEEDSKENLTKIISNNQNEEDTEVSVKVSVWFHELRDFTEDIIIDENVIPTGVQAGQVFELQSLDEGSSKKFVFTVQKRNLRSATNDTDYTEASKPKLQISLMANPFQRLLDLAPRSQVQLKRLVKLESVTVDSVEIFIKDVNLSRDAMWNFSASMIGNCVYIDQRLLYLGSRVGVTKHIYKNGKNVTSGYVDKNTKIIYRSESAKITLFVQLSREMWHFEEDGEIMFHKLINNLFPKIFRRWRETNTHHSITIVLFTSIDLTDIPWTNLGPGQRPPQRRDFFRVVVDQVNSMHWDRIMEDLRLEFANFKRDTMLNLDDDGKFIIENGTLPAIKGNLLEAVNLGLTSLNNRFQNTDLKHSISHIMVITPGTGLFDVEHDLLLETSKKMSSVDSSLDIICLSQPPLHVTPLFRYIKEGKVCHCVPLWCDISFFIDKVQQESQWIPRCKIYELQMMGVMENEASDARIPRLHLNNYGKTLVEIMDEYDSAVFKPIKRIPKPAQVEFKQVKPKFQAPELKNATATLSLMFENKPLLQPSNSSTISLATGTVANPSKDTSALSSLYYINKNSEEIKSPAPSVRSETPVSTIRAIDSYRKSAGSPRLIRGETMFKRKEEIPNTEPPSALSEKNAASARKKSSILAEPEQEISTGSFWIEISNPSQETTTNVLQRSQSSRWSNIFPNKIQRKLIKWRSFQAPASLPTTTGVFPSTNQLQTDYTFQIYTVFLNSDNYWELKSTHSLMREMIQLRLMLGFQVCYGERVDKAEAERKPSGNVDAIIKYFPEEHNYLGSRIYLAFGDEIHRIFCDYNGNINVQLYRKIIENDEKKITLGQTKLKPYFPLIRTRYTDEYTPARIDAIADNPQKFNWNQFDQLLAGFDDAMPEEKKQFHKMKFVVMPTDIPKNAYFVSNEKLTPEEIRVEGLRKLIGVIERGKYKHDSSQKKKSRRGSDVIFYTGNLYDFLNEEAQNYDITGTQPALMIPESSRFNKTIKLPDLAQELQDRNTGLTLVDRTWHFKRHLHCFVGSELVSWLVDCFEDIETREDATTYGQNLMNKGLFKHVESRHGLLDGHFFYEFSDEYVDKTDREKPSWFGSKKIDGASTPQSNSSPRIAGQNDLQKIISASNLRSETSSTTDSMGRKRKKFILSRSVKFDVDPLKKSFRPEFVTVHYDRVHNPEHCYHIRLQWLNATTKFIEDTITAWTRLCERHGLKLVETPWNELCSLPKLSPFHSFVDIKLSVNPWTDPDLCDDRILSSNRYYYHSYFLKQMGYYLDNRSTSFFSRENIDIGYSWGKPTFRYAQFIHKTGFYIVELRDNGDFFLAPNNMHLTRVRSSTTLVGDYENYSKGVLADSQTVMLNFRAACQNKEFLKETFTLAKSNWKDDYFSQII</sequence>
<reference key="1">
    <citation type="journal article" date="2004" name="Proc. Natl. Acad. Sci. U.S.A.">
        <title>The diploid genome sequence of Candida albicans.</title>
        <authorList>
            <person name="Jones T."/>
            <person name="Federspiel N.A."/>
            <person name="Chibana H."/>
            <person name="Dungan J."/>
            <person name="Kalman S."/>
            <person name="Magee B.B."/>
            <person name="Newport G."/>
            <person name="Thorstenson Y.R."/>
            <person name="Agabian N."/>
            <person name="Magee P.T."/>
            <person name="Davis R.W."/>
            <person name="Scherer S."/>
        </authorList>
    </citation>
    <scope>NUCLEOTIDE SEQUENCE [LARGE SCALE GENOMIC DNA]</scope>
    <source>
        <strain>SC5314 / ATCC MYA-2876</strain>
    </source>
</reference>
<reference key="2">
    <citation type="journal article" date="2007" name="Genome Biol.">
        <title>Assembly of the Candida albicans genome into sixteen supercontigs aligned on the eight chromosomes.</title>
        <authorList>
            <person name="van het Hoog M."/>
            <person name="Rast T.J."/>
            <person name="Martchenko M."/>
            <person name="Grindle S."/>
            <person name="Dignard D."/>
            <person name="Hogues H."/>
            <person name="Cuomo C."/>
            <person name="Berriman M."/>
            <person name="Scherer S."/>
            <person name="Magee B.B."/>
            <person name="Whiteway M."/>
            <person name="Chibana H."/>
            <person name="Nantel A."/>
            <person name="Magee P.T."/>
        </authorList>
    </citation>
    <scope>GENOME REANNOTATION</scope>
    <source>
        <strain>SC5314 / ATCC MYA-2876</strain>
    </source>
</reference>
<reference key="3">
    <citation type="journal article" date="2013" name="Genome Biol.">
        <title>Assembly of a phased diploid Candida albicans genome facilitates allele-specific measurements and provides a simple model for repeat and indel structure.</title>
        <authorList>
            <person name="Muzzey D."/>
            <person name="Schwartz K."/>
            <person name="Weissman J.S."/>
            <person name="Sherlock G."/>
        </authorList>
    </citation>
    <scope>NUCLEOTIDE SEQUENCE [LARGE SCALE GENOMIC DNA]</scope>
    <scope>GENOME REANNOTATION</scope>
    <source>
        <strain>SC5314 / ATCC MYA-2876</strain>
    </source>
</reference>
<feature type="chain" id="PRO_0000301766" description="Vacuolar membrane-associated protein IML1">
    <location>
        <begin position="1"/>
        <end position="1462"/>
    </location>
</feature>
<feature type="domain" description="DEP" evidence="2">
    <location>
        <begin position="1077"/>
        <end position="1152"/>
    </location>
</feature>
<feature type="region of interest" description="Disordered" evidence="3">
    <location>
        <begin position="1"/>
        <end position="55"/>
    </location>
</feature>
<feature type="region of interest" description="Disordered" evidence="3">
    <location>
        <begin position="688"/>
        <end position="717"/>
    </location>
</feature>
<feature type="region of interest" description="Disordered" evidence="3">
    <location>
        <begin position="1166"/>
        <end position="1185"/>
    </location>
</feature>
<feature type="compositionally biased region" description="Polar residues" evidence="3">
    <location>
        <begin position="7"/>
        <end position="55"/>
    </location>
</feature>
<feature type="compositionally biased region" description="Polar residues" evidence="3">
    <location>
        <begin position="1175"/>
        <end position="1185"/>
    </location>
</feature>
<comment type="subcellular location">
    <subcellularLocation>
        <location evidence="1">Vacuole membrane</location>
        <topology evidence="1">Peripheral membrane protein</topology>
    </subcellularLocation>
</comment>
<comment type="similarity">
    <text evidence="4">Belongs to the IML1 family.</text>
</comment>
<comment type="sequence caution" evidence="4">
    <conflict type="erroneous initiation">
        <sequence resource="EMBL-CDS" id="AOW25942"/>
    </conflict>
    <text>Truncated N-terminus.</text>
</comment>
<name>IML1_CANAL</name>
<proteinExistence type="inferred from homology"/>
<organism>
    <name type="scientific">Candida albicans (strain SC5314 / ATCC MYA-2876)</name>
    <name type="common">Yeast</name>
    <dbReference type="NCBI Taxonomy" id="237561"/>
    <lineage>
        <taxon>Eukaryota</taxon>
        <taxon>Fungi</taxon>
        <taxon>Dikarya</taxon>
        <taxon>Ascomycota</taxon>
        <taxon>Saccharomycotina</taxon>
        <taxon>Pichiomycetes</taxon>
        <taxon>Debaryomycetaceae</taxon>
        <taxon>Candida/Lodderomyces clade</taxon>
        <taxon>Candida</taxon>
    </lineage>
</organism>
<gene>
    <name type="primary">IML1</name>
    <name type="ordered locus">CAALFM_C102610WA</name>
    <name type="ORF">CaO19.10466</name>
    <name type="ORF">CaO19.2949</name>
</gene>
<evidence type="ECO:0000250" key="1"/>
<evidence type="ECO:0000255" key="2">
    <source>
        <dbReference type="PROSITE-ProRule" id="PRU00066"/>
    </source>
</evidence>
<evidence type="ECO:0000256" key="3">
    <source>
        <dbReference type="SAM" id="MobiDB-lite"/>
    </source>
</evidence>
<evidence type="ECO:0000305" key="4"/>